<accession>Q87SZ0</accession>
<name>RPOA_VIBPA</name>
<keyword id="KW-0240">DNA-directed RNA polymerase</keyword>
<keyword id="KW-0548">Nucleotidyltransferase</keyword>
<keyword id="KW-0804">Transcription</keyword>
<keyword id="KW-0808">Transferase</keyword>
<feature type="chain" id="PRO_0000175417" description="DNA-directed RNA polymerase subunit alpha">
    <location>
        <begin position="1"/>
        <end position="330"/>
    </location>
</feature>
<feature type="region of interest" description="Alpha N-terminal domain (alpha-NTD)" evidence="1">
    <location>
        <begin position="1"/>
        <end position="236"/>
    </location>
</feature>
<feature type="region of interest" description="Alpha C-terminal domain (alpha-CTD)" evidence="1">
    <location>
        <begin position="250"/>
        <end position="330"/>
    </location>
</feature>
<sequence length="330" mass="36472">MQGSVTEFLKPRLVDIEQISSTHAKVTLEPLERGFGHTLGNALRRILLSSMPGCAVTEVEIEGVLHEYSTKEGVQEDILEILLNLKGLAVRVAEGKDEVFITLNKSGSGPVVAGDITHDGDVEIANPEHVICHLTDDNAEIAMRIKVERGRGYVPASARIHNEEDERPIGRLLVDATYSPVDKIAYAVEAARVEQRTDLDKLVIDMETNGTLEPEEAIRRAATILAEQLDAFVDLRDVRVPEEKEEKPEFDPILLRPVDDLELTVRSANCLKAEAIHYIGDLVQRTEVELLKTPNLGKKSLTEIKDVLASRGLSLGMRLENWPPASIAED</sequence>
<proteinExistence type="inferred from homology"/>
<evidence type="ECO:0000255" key="1">
    <source>
        <dbReference type="HAMAP-Rule" id="MF_00059"/>
    </source>
</evidence>
<reference key="1">
    <citation type="journal article" date="2003" name="Lancet">
        <title>Genome sequence of Vibrio parahaemolyticus: a pathogenic mechanism distinct from that of V. cholerae.</title>
        <authorList>
            <person name="Makino K."/>
            <person name="Oshima K."/>
            <person name="Kurokawa K."/>
            <person name="Yokoyama K."/>
            <person name="Uda T."/>
            <person name="Tagomori K."/>
            <person name="Iijima Y."/>
            <person name="Najima M."/>
            <person name="Nakano M."/>
            <person name="Yamashita A."/>
            <person name="Kubota Y."/>
            <person name="Kimura S."/>
            <person name="Yasunaga T."/>
            <person name="Honda T."/>
            <person name="Shinagawa H."/>
            <person name="Hattori M."/>
            <person name="Iida T."/>
        </authorList>
    </citation>
    <scope>NUCLEOTIDE SEQUENCE [LARGE SCALE GENOMIC DNA]</scope>
    <source>
        <strain>RIMD 2210633</strain>
    </source>
</reference>
<dbReference type="EC" id="2.7.7.6" evidence="1"/>
<dbReference type="EMBL" id="BA000031">
    <property type="protein sequence ID" value="BAC58545.1"/>
    <property type="molecule type" value="Genomic_DNA"/>
</dbReference>
<dbReference type="RefSeq" id="NP_796661.1">
    <property type="nucleotide sequence ID" value="NC_004603.1"/>
</dbReference>
<dbReference type="RefSeq" id="WP_005383143.1">
    <property type="nucleotide sequence ID" value="NC_004603.1"/>
</dbReference>
<dbReference type="SMR" id="Q87SZ0"/>
<dbReference type="GeneID" id="83583098"/>
<dbReference type="KEGG" id="vpa:VP0282"/>
<dbReference type="PATRIC" id="fig|223926.6.peg.273"/>
<dbReference type="eggNOG" id="COG0202">
    <property type="taxonomic scope" value="Bacteria"/>
</dbReference>
<dbReference type="HOGENOM" id="CLU_053084_0_0_6"/>
<dbReference type="Proteomes" id="UP000002493">
    <property type="component" value="Chromosome 1"/>
</dbReference>
<dbReference type="GO" id="GO:0005737">
    <property type="term" value="C:cytoplasm"/>
    <property type="evidence" value="ECO:0007669"/>
    <property type="project" value="UniProtKB-ARBA"/>
</dbReference>
<dbReference type="GO" id="GO:0000428">
    <property type="term" value="C:DNA-directed RNA polymerase complex"/>
    <property type="evidence" value="ECO:0007669"/>
    <property type="project" value="UniProtKB-KW"/>
</dbReference>
<dbReference type="GO" id="GO:0003677">
    <property type="term" value="F:DNA binding"/>
    <property type="evidence" value="ECO:0007669"/>
    <property type="project" value="UniProtKB-UniRule"/>
</dbReference>
<dbReference type="GO" id="GO:0003899">
    <property type="term" value="F:DNA-directed RNA polymerase activity"/>
    <property type="evidence" value="ECO:0007669"/>
    <property type="project" value="UniProtKB-UniRule"/>
</dbReference>
<dbReference type="GO" id="GO:0046983">
    <property type="term" value="F:protein dimerization activity"/>
    <property type="evidence" value="ECO:0007669"/>
    <property type="project" value="InterPro"/>
</dbReference>
<dbReference type="GO" id="GO:0006351">
    <property type="term" value="P:DNA-templated transcription"/>
    <property type="evidence" value="ECO:0007669"/>
    <property type="project" value="UniProtKB-UniRule"/>
</dbReference>
<dbReference type="CDD" id="cd06928">
    <property type="entry name" value="RNAP_alpha_NTD"/>
    <property type="match status" value="1"/>
</dbReference>
<dbReference type="FunFam" id="1.10.150.20:FF:000001">
    <property type="entry name" value="DNA-directed RNA polymerase subunit alpha"/>
    <property type="match status" value="1"/>
</dbReference>
<dbReference type="FunFam" id="2.170.120.12:FF:000001">
    <property type="entry name" value="DNA-directed RNA polymerase subunit alpha"/>
    <property type="match status" value="1"/>
</dbReference>
<dbReference type="Gene3D" id="1.10.150.20">
    <property type="entry name" value="5' to 3' exonuclease, C-terminal subdomain"/>
    <property type="match status" value="1"/>
</dbReference>
<dbReference type="Gene3D" id="2.170.120.12">
    <property type="entry name" value="DNA-directed RNA polymerase, insert domain"/>
    <property type="match status" value="1"/>
</dbReference>
<dbReference type="Gene3D" id="3.30.1360.10">
    <property type="entry name" value="RNA polymerase, RBP11-like subunit"/>
    <property type="match status" value="1"/>
</dbReference>
<dbReference type="HAMAP" id="MF_00059">
    <property type="entry name" value="RNApol_bact_RpoA"/>
    <property type="match status" value="1"/>
</dbReference>
<dbReference type="InterPro" id="IPR011262">
    <property type="entry name" value="DNA-dir_RNA_pol_insert"/>
</dbReference>
<dbReference type="InterPro" id="IPR011263">
    <property type="entry name" value="DNA-dir_RNA_pol_RpoA/D/Rpb3"/>
</dbReference>
<dbReference type="InterPro" id="IPR011773">
    <property type="entry name" value="DNA-dir_RpoA"/>
</dbReference>
<dbReference type="InterPro" id="IPR036603">
    <property type="entry name" value="RBP11-like"/>
</dbReference>
<dbReference type="InterPro" id="IPR011260">
    <property type="entry name" value="RNAP_asu_C"/>
</dbReference>
<dbReference type="InterPro" id="IPR036643">
    <property type="entry name" value="RNApol_insert_sf"/>
</dbReference>
<dbReference type="NCBIfam" id="NF003513">
    <property type="entry name" value="PRK05182.1-2"/>
    <property type="match status" value="1"/>
</dbReference>
<dbReference type="NCBIfam" id="NF003519">
    <property type="entry name" value="PRK05182.2-5"/>
    <property type="match status" value="1"/>
</dbReference>
<dbReference type="NCBIfam" id="TIGR02027">
    <property type="entry name" value="rpoA"/>
    <property type="match status" value="1"/>
</dbReference>
<dbReference type="Pfam" id="PF01000">
    <property type="entry name" value="RNA_pol_A_bac"/>
    <property type="match status" value="1"/>
</dbReference>
<dbReference type="Pfam" id="PF03118">
    <property type="entry name" value="RNA_pol_A_CTD"/>
    <property type="match status" value="1"/>
</dbReference>
<dbReference type="Pfam" id="PF01193">
    <property type="entry name" value="RNA_pol_L"/>
    <property type="match status" value="1"/>
</dbReference>
<dbReference type="SMART" id="SM00662">
    <property type="entry name" value="RPOLD"/>
    <property type="match status" value="1"/>
</dbReference>
<dbReference type="SUPFAM" id="SSF47789">
    <property type="entry name" value="C-terminal domain of RNA polymerase alpha subunit"/>
    <property type="match status" value="1"/>
</dbReference>
<dbReference type="SUPFAM" id="SSF56553">
    <property type="entry name" value="Insert subdomain of RNA polymerase alpha subunit"/>
    <property type="match status" value="1"/>
</dbReference>
<dbReference type="SUPFAM" id="SSF55257">
    <property type="entry name" value="RBP11-like subunits of RNA polymerase"/>
    <property type="match status" value="1"/>
</dbReference>
<gene>
    <name evidence="1" type="primary">rpoA</name>
    <name type="ordered locus">VP0282</name>
</gene>
<protein>
    <recommendedName>
        <fullName evidence="1">DNA-directed RNA polymerase subunit alpha</fullName>
        <shortName evidence="1">RNAP subunit alpha</shortName>
        <ecNumber evidence="1">2.7.7.6</ecNumber>
    </recommendedName>
    <alternativeName>
        <fullName evidence="1">RNA polymerase subunit alpha</fullName>
    </alternativeName>
    <alternativeName>
        <fullName evidence="1">Transcriptase subunit alpha</fullName>
    </alternativeName>
</protein>
<comment type="function">
    <text evidence="1">DNA-dependent RNA polymerase catalyzes the transcription of DNA into RNA using the four ribonucleoside triphosphates as substrates.</text>
</comment>
<comment type="catalytic activity">
    <reaction evidence="1">
        <text>RNA(n) + a ribonucleoside 5'-triphosphate = RNA(n+1) + diphosphate</text>
        <dbReference type="Rhea" id="RHEA:21248"/>
        <dbReference type="Rhea" id="RHEA-COMP:14527"/>
        <dbReference type="Rhea" id="RHEA-COMP:17342"/>
        <dbReference type="ChEBI" id="CHEBI:33019"/>
        <dbReference type="ChEBI" id="CHEBI:61557"/>
        <dbReference type="ChEBI" id="CHEBI:140395"/>
        <dbReference type="EC" id="2.7.7.6"/>
    </reaction>
</comment>
<comment type="subunit">
    <text evidence="1">Homodimer. The RNAP catalytic core consists of 2 alpha, 1 beta, 1 beta' and 1 omega subunit. When a sigma factor is associated with the core the holoenzyme is formed, which can initiate transcription.</text>
</comment>
<comment type="domain">
    <text evidence="1">The N-terminal domain is essential for RNAP assembly and basal transcription, whereas the C-terminal domain is involved in interaction with transcriptional regulators and with upstream promoter elements.</text>
</comment>
<comment type="similarity">
    <text evidence="1">Belongs to the RNA polymerase alpha chain family.</text>
</comment>
<organism>
    <name type="scientific">Vibrio parahaemolyticus serotype O3:K6 (strain RIMD 2210633)</name>
    <dbReference type="NCBI Taxonomy" id="223926"/>
    <lineage>
        <taxon>Bacteria</taxon>
        <taxon>Pseudomonadati</taxon>
        <taxon>Pseudomonadota</taxon>
        <taxon>Gammaproteobacteria</taxon>
        <taxon>Vibrionales</taxon>
        <taxon>Vibrionaceae</taxon>
        <taxon>Vibrio</taxon>
    </lineage>
</organism>